<dbReference type="EC" id="2.4.1.80" evidence="4"/>
<dbReference type="EMBL" id="AF364402">
    <property type="protein sequence ID" value="AAK73019.1"/>
    <property type="molecule type" value="mRNA"/>
</dbReference>
<dbReference type="EMBL" id="CM001231">
    <property type="protein sequence ID" value="EHA57494.1"/>
    <property type="molecule type" value="Genomic_DNA"/>
</dbReference>
<dbReference type="RefSeq" id="XP_003710106.1">
    <property type="nucleotide sequence ID" value="XM_003710058.1"/>
</dbReference>
<dbReference type="STRING" id="242507.G4MS28"/>
<dbReference type="CAZy" id="GT21">
    <property type="family name" value="Glycosyltransferase Family 21"/>
</dbReference>
<dbReference type="EnsemblFungi" id="MGG_10668T0">
    <property type="protein sequence ID" value="MGG_10668T0"/>
    <property type="gene ID" value="MGG_10668"/>
</dbReference>
<dbReference type="GeneID" id="2682281"/>
<dbReference type="KEGG" id="mgr:MGG_10668"/>
<dbReference type="VEuPathDB" id="FungiDB:MGG_10668"/>
<dbReference type="eggNOG" id="KOG2547">
    <property type="taxonomic scope" value="Eukaryota"/>
</dbReference>
<dbReference type="HOGENOM" id="CLU_030898_1_0_1"/>
<dbReference type="InParanoid" id="G4MS28"/>
<dbReference type="OMA" id="IVWIIDC"/>
<dbReference type="OrthoDB" id="1483400at2759"/>
<dbReference type="UniPathway" id="UPA00222"/>
<dbReference type="PHI-base" id="PHI:4493"/>
<dbReference type="Proteomes" id="UP000009058">
    <property type="component" value="Chromosome 1"/>
</dbReference>
<dbReference type="GO" id="GO:0000139">
    <property type="term" value="C:Golgi membrane"/>
    <property type="evidence" value="ECO:0007669"/>
    <property type="project" value="UniProtKB-SubCell"/>
</dbReference>
<dbReference type="GO" id="GO:0008120">
    <property type="term" value="F:ceramide glucosyltransferase activity"/>
    <property type="evidence" value="ECO:0007669"/>
    <property type="project" value="UniProtKB-EC"/>
</dbReference>
<dbReference type="GO" id="GO:0006679">
    <property type="term" value="P:glucosylceramide biosynthetic process"/>
    <property type="evidence" value="ECO:0007669"/>
    <property type="project" value="TreeGrafter"/>
</dbReference>
<dbReference type="Gene3D" id="3.90.550.10">
    <property type="entry name" value="Spore Coat Polysaccharide Biosynthesis Protein SpsA, Chain A"/>
    <property type="match status" value="1"/>
</dbReference>
<dbReference type="InterPro" id="IPR025993">
    <property type="entry name" value="Ceramide_glucosylTrfase"/>
</dbReference>
<dbReference type="InterPro" id="IPR029044">
    <property type="entry name" value="Nucleotide-diphossugar_trans"/>
</dbReference>
<dbReference type="PANTHER" id="PTHR12726">
    <property type="entry name" value="CERAMIDE GLUCOSYLTRANSFERASE"/>
    <property type="match status" value="1"/>
</dbReference>
<dbReference type="PANTHER" id="PTHR12726:SF0">
    <property type="entry name" value="CERAMIDE GLUCOSYLTRANSFERASE"/>
    <property type="match status" value="1"/>
</dbReference>
<dbReference type="Pfam" id="PF13506">
    <property type="entry name" value="Glyco_transf_21"/>
    <property type="match status" value="1"/>
</dbReference>
<dbReference type="SUPFAM" id="SSF53448">
    <property type="entry name" value="Nucleotide-diphospho-sugar transferases"/>
    <property type="match status" value="1"/>
</dbReference>
<name>CEGT_PYRO7</name>
<feature type="chain" id="PRO_0000434807" description="Ceramide glucosyltransferase">
    <location>
        <begin position="1"/>
        <end position="494"/>
    </location>
</feature>
<feature type="topological domain" description="Lumenal" evidence="6">
    <location>
        <begin position="1"/>
        <end position="6"/>
    </location>
</feature>
<feature type="transmembrane region" description="Helical" evidence="3">
    <location>
        <begin position="7"/>
        <end position="27"/>
    </location>
</feature>
<feature type="topological domain" description="Cytoplasmic" evidence="2">
    <location>
        <begin position="28"/>
        <end position="337"/>
    </location>
</feature>
<feature type="transmembrane region" description="Helical" evidence="3">
    <location>
        <begin position="338"/>
        <end position="358"/>
    </location>
</feature>
<feature type="topological domain" description="Lumenal" evidence="6">
    <location>
        <begin position="359"/>
        <end position="380"/>
    </location>
</feature>
<feature type="transmembrane region" description="Helical" evidence="3">
    <location>
        <begin position="381"/>
        <end position="401"/>
    </location>
</feature>
<feature type="topological domain" description="Cytoplasmic" evidence="6">
    <location>
        <begin position="402"/>
        <end position="428"/>
    </location>
</feature>
<feature type="transmembrane region" description="Helical" evidence="3">
    <location>
        <begin position="429"/>
        <end position="449"/>
    </location>
</feature>
<feature type="topological domain" description="Lumenal" evidence="6">
    <location>
        <begin position="450"/>
        <end position="494"/>
    </location>
</feature>
<feature type="short sequence motif" description="D1" evidence="6">
    <location>
        <position position="95"/>
    </location>
</feature>
<feature type="short sequence motif" description="D2" evidence="6">
    <location>
        <position position="160"/>
    </location>
</feature>
<feature type="short sequence motif" description="D3" evidence="6">
    <location>
        <position position="285"/>
    </location>
</feature>
<feature type="short sequence motif" description="(Q/R)XXRW" evidence="6">
    <location>
        <begin position="326"/>
        <end position="330"/>
    </location>
</feature>
<feature type="active site" description="Proton acceptor" evidence="2">
    <location>
        <position position="285"/>
    </location>
</feature>
<accession>G4MS28</accession>
<accession>Q96V38</accession>
<comment type="function">
    <text evidence="4">Catalyzes the final step in the biosynthesis of the membrane lipid glucosylceramide (GluCer), the transfer of glucose to ceramide. Glucosylceramides play important roles in growth, differentiation and pathogenicity.</text>
</comment>
<comment type="catalytic activity">
    <reaction evidence="4">
        <text>an N-acylsphing-4-enine + UDP-alpha-D-glucose = a beta-D-glucosyl-(1&lt;-&gt;1')-N-acylsphing-4-enine + UDP + H(+)</text>
        <dbReference type="Rhea" id="RHEA:12088"/>
        <dbReference type="ChEBI" id="CHEBI:15378"/>
        <dbReference type="ChEBI" id="CHEBI:22801"/>
        <dbReference type="ChEBI" id="CHEBI:52639"/>
        <dbReference type="ChEBI" id="CHEBI:58223"/>
        <dbReference type="ChEBI" id="CHEBI:58885"/>
        <dbReference type="EC" id="2.4.1.80"/>
    </reaction>
</comment>
<comment type="pathway">
    <text evidence="7">Lipid metabolism; sphingolipid metabolism.</text>
</comment>
<comment type="subcellular location">
    <subcellularLocation>
        <location evidence="2">Golgi apparatus membrane</location>
        <topology evidence="3">Multi-pass membrane protein</topology>
    </subcellularLocation>
</comment>
<comment type="domain">
    <text evidence="2">The D1, D2, D3, (Q/R)XXRW motif is a critical part of the GCS active site, involved in catalysis and UDP-sugar binding.</text>
</comment>
<comment type="similarity">
    <text evidence="6">Belongs to the glycosyltransferase 2 family.</text>
</comment>
<evidence type="ECO:0000250" key="1">
    <source>
        <dbReference type="UniProtKB" id="Q16739"/>
    </source>
</evidence>
<evidence type="ECO:0000250" key="2">
    <source>
        <dbReference type="UniProtKB" id="Q9R0E0"/>
    </source>
</evidence>
<evidence type="ECO:0000255" key="3"/>
<evidence type="ECO:0000269" key="4">
    <source>
    </source>
</evidence>
<evidence type="ECO:0000303" key="5">
    <source>
    </source>
</evidence>
<evidence type="ECO:0000305" key="6"/>
<evidence type="ECO:0000305" key="7">
    <source>
    </source>
</evidence>
<reference key="1">
    <citation type="journal article" date="2001" name="J. Biol. Chem.">
        <title>Glucosylceramide synthases, a gene family responsible for the biosynthesis of glucosphingolipids in animals, plants, and fungi.</title>
        <authorList>
            <person name="Leipelt M."/>
            <person name="Warnecke D."/>
            <person name="Zahringer U."/>
            <person name="Ott C."/>
            <person name="Muller F."/>
            <person name="Hube B."/>
            <person name="Heinz E."/>
        </authorList>
    </citation>
    <scope>NUCLEOTIDE SEQUENCE [MRNA]</scope>
    <scope>FUNCTION</scope>
    <scope>CATALYTIC ACTIVITY</scope>
    <scope>PATHWAY</scope>
    <source>
        <strain>70-15 / ATCC MYA-4617 / FGSC 8958</strain>
    </source>
</reference>
<reference key="2">
    <citation type="journal article" date="2005" name="Nature">
        <title>The genome sequence of the rice blast fungus Magnaporthe grisea.</title>
        <authorList>
            <person name="Dean R.A."/>
            <person name="Talbot N.J."/>
            <person name="Ebbole D.J."/>
            <person name="Farman M.L."/>
            <person name="Mitchell T.K."/>
            <person name="Orbach M.J."/>
            <person name="Thon M.R."/>
            <person name="Kulkarni R."/>
            <person name="Xu J.-R."/>
            <person name="Pan H."/>
            <person name="Read N.D."/>
            <person name="Lee Y.-H."/>
            <person name="Carbone I."/>
            <person name="Brown D."/>
            <person name="Oh Y.Y."/>
            <person name="Donofrio N."/>
            <person name="Jeong J.S."/>
            <person name="Soanes D.M."/>
            <person name="Djonovic S."/>
            <person name="Kolomiets E."/>
            <person name="Rehmeyer C."/>
            <person name="Li W."/>
            <person name="Harding M."/>
            <person name="Kim S."/>
            <person name="Lebrun M.-H."/>
            <person name="Bohnert H."/>
            <person name="Coughlan S."/>
            <person name="Butler J."/>
            <person name="Calvo S.E."/>
            <person name="Ma L.-J."/>
            <person name="Nicol R."/>
            <person name="Purcell S."/>
            <person name="Nusbaum C."/>
            <person name="Galagan J.E."/>
            <person name="Birren B.W."/>
        </authorList>
    </citation>
    <scope>NUCLEOTIDE SEQUENCE [LARGE SCALE GENOMIC DNA]</scope>
    <source>
        <strain>70-15 / ATCC MYA-4617 / FGSC 8958</strain>
    </source>
</reference>
<sequence>MPLLMDGLAYAGAIWSLIVFCVQAIGLYQLFRSYSRPPPPPVSPSLTSEDVPHVTVIRPVKGLEPRLYECLISTLQQSYPRDKLSVHLCISSKEDPAYPVLKKVVVEYSATHDVRLFVETEDPLLYGTTGDTRNLGPNPKIRNISHAYREAKGDIIWIIDCNIWVSKGTAGRMVDKLCGFPAGSRPYKFVHQLPLSVDVTPPQDSGVLRTGGGRLDEMFMATTHGKFYSAINTVGVAPCICGKSNMFRKSHLDRLTDPAHNPILPKETATRPRGIDYFSAYICEDHLIGDLLWRSQVPGHGNHGLVFGDLALQPMMNNSVGSYIARRVRWLRVRKWTVLLATLVEPGVESMVCCMAFAHALTTTPWCPNPADWPIPHTWTALWSIWLAAIAVWATLDYVVYHFLHSCRSIEKDADSPDFAQGNELMKRPFGAWILAWIGREILALPIWTRAVLLGTTVTWRGTKFKVRPDQSVVDIPNAGAKSNGIGSTNRKVR</sequence>
<gene>
    <name type="ORF">MGG_10668</name>
</gene>
<organism>
    <name type="scientific">Pyricularia oryzae (strain 70-15 / ATCC MYA-4617 / FGSC 8958)</name>
    <name type="common">Rice blast fungus</name>
    <name type="synonym">Magnaporthe oryzae</name>
    <dbReference type="NCBI Taxonomy" id="242507"/>
    <lineage>
        <taxon>Eukaryota</taxon>
        <taxon>Fungi</taxon>
        <taxon>Dikarya</taxon>
        <taxon>Ascomycota</taxon>
        <taxon>Pezizomycotina</taxon>
        <taxon>Sordariomycetes</taxon>
        <taxon>Sordariomycetidae</taxon>
        <taxon>Magnaporthales</taxon>
        <taxon>Pyriculariaceae</taxon>
        <taxon>Pyricularia</taxon>
    </lineage>
</organism>
<protein>
    <recommendedName>
        <fullName evidence="1">Ceramide glucosyltransferase</fullName>
        <ecNumber evidence="4">2.4.1.80</ecNumber>
    </recommendedName>
    <alternativeName>
        <fullName>GLCT-1</fullName>
    </alternativeName>
    <alternativeName>
        <fullName evidence="5">Glucosylceramide synthase</fullName>
        <shortName>GCS</shortName>
    </alternativeName>
    <alternativeName>
        <fullName>UDP-glucose ceramide glucosyltransferase</fullName>
    </alternativeName>
    <alternativeName>
        <fullName>UDP-glucose:N-acylsphingosine D-glucosyltransferase</fullName>
    </alternativeName>
</protein>
<proteinExistence type="evidence at protein level"/>
<keyword id="KW-0328">Glycosyltransferase</keyword>
<keyword id="KW-0333">Golgi apparatus</keyword>
<keyword id="KW-0443">Lipid metabolism</keyword>
<keyword id="KW-0472">Membrane</keyword>
<keyword id="KW-1185">Reference proteome</keyword>
<keyword id="KW-0746">Sphingolipid metabolism</keyword>
<keyword id="KW-0808">Transferase</keyword>
<keyword id="KW-0812">Transmembrane</keyword>
<keyword id="KW-1133">Transmembrane helix</keyword>